<evidence type="ECO:0000255" key="1">
    <source>
        <dbReference type="HAMAP-Rule" id="MF_00173"/>
    </source>
</evidence>
<proteinExistence type="inferred from homology"/>
<dbReference type="EMBL" id="CP000139">
    <property type="protein sequence ID" value="ABR38302.1"/>
    <property type="molecule type" value="Genomic_DNA"/>
</dbReference>
<dbReference type="RefSeq" id="WP_005841035.1">
    <property type="nucleotide sequence ID" value="NZ_JANSWM010000101.1"/>
</dbReference>
<dbReference type="SMR" id="A6KXY8"/>
<dbReference type="STRING" id="435590.BVU_0594"/>
<dbReference type="PaxDb" id="435590-BVU_0594"/>
<dbReference type="GeneID" id="5301562"/>
<dbReference type="KEGG" id="bvu:BVU_0594"/>
<dbReference type="eggNOG" id="COG1438">
    <property type="taxonomic scope" value="Bacteria"/>
</dbReference>
<dbReference type="HOGENOM" id="CLU_097103_0_0_10"/>
<dbReference type="BioCyc" id="BVUL435590:G1G59-621-MONOMER"/>
<dbReference type="UniPathway" id="UPA00068"/>
<dbReference type="Proteomes" id="UP000002861">
    <property type="component" value="Chromosome"/>
</dbReference>
<dbReference type="GO" id="GO:0005737">
    <property type="term" value="C:cytoplasm"/>
    <property type="evidence" value="ECO:0007669"/>
    <property type="project" value="UniProtKB-SubCell"/>
</dbReference>
<dbReference type="GO" id="GO:0034618">
    <property type="term" value="F:arginine binding"/>
    <property type="evidence" value="ECO:0007669"/>
    <property type="project" value="InterPro"/>
</dbReference>
<dbReference type="GO" id="GO:0003677">
    <property type="term" value="F:DNA binding"/>
    <property type="evidence" value="ECO:0007669"/>
    <property type="project" value="UniProtKB-KW"/>
</dbReference>
<dbReference type="GO" id="GO:0003700">
    <property type="term" value="F:DNA-binding transcription factor activity"/>
    <property type="evidence" value="ECO:0007669"/>
    <property type="project" value="UniProtKB-UniRule"/>
</dbReference>
<dbReference type="GO" id="GO:0006526">
    <property type="term" value="P:L-arginine biosynthetic process"/>
    <property type="evidence" value="ECO:0007669"/>
    <property type="project" value="UniProtKB-UniPathway"/>
</dbReference>
<dbReference type="GO" id="GO:0051259">
    <property type="term" value="P:protein complex oligomerization"/>
    <property type="evidence" value="ECO:0007669"/>
    <property type="project" value="InterPro"/>
</dbReference>
<dbReference type="GO" id="GO:1900079">
    <property type="term" value="P:regulation of arginine biosynthetic process"/>
    <property type="evidence" value="ECO:0007669"/>
    <property type="project" value="UniProtKB-UniRule"/>
</dbReference>
<dbReference type="Gene3D" id="3.30.1360.40">
    <property type="match status" value="1"/>
</dbReference>
<dbReference type="Gene3D" id="1.10.10.10">
    <property type="entry name" value="Winged helix-like DNA-binding domain superfamily/Winged helix DNA-binding domain"/>
    <property type="match status" value="1"/>
</dbReference>
<dbReference type="HAMAP" id="MF_00173">
    <property type="entry name" value="Arg_repressor"/>
    <property type="match status" value="1"/>
</dbReference>
<dbReference type="InterPro" id="IPR001669">
    <property type="entry name" value="Arg_repress"/>
</dbReference>
<dbReference type="InterPro" id="IPR020899">
    <property type="entry name" value="Arg_repress_C"/>
</dbReference>
<dbReference type="InterPro" id="IPR036251">
    <property type="entry name" value="Arg_repress_C_sf"/>
</dbReference>
<dbReference type="InterPro" id="IPR020900">
    <property type="entry name" value="Arg_repress_DNA-bd"/>
</dbReference>
<dbReference type="InterPro" id="IPR036388">
    <property type="entry name" value="WH-like_DNA-bd_sf"/>
</dbReference>
<dbReference type="InterPro" id="IPR036390">
    <property type="entry name" value="WH_DNA-bd_sf"/>
</dbReference>
<dbReference type="NCBIfam" id="TIGR01529">
    <property type="entry name" value="argR_whole"/>
    <property type="match status" value="1"/>
</dbReference>
<dbReference type="PANTHER" id="PTHR34471">
    <property type="entry name" value="ARGININE REPRESSOR"/>
    <property type="match status" value="1"/>
</dbReference>
<dbReference type="PANTHER" id="PTHR34471:SF1">
    <property type="entry name" value="ARGININE REPRESSOR"/>
    <property type="match status" value="1"/>
</dbReference>
<dbReference type="Pfam" id="PF01316">
    <property type="entry name" value="Arg_repressor"/>
    <property type="match status" value="1"/>
</dbReference>
<dbReference type="Pfam" id="PF02863">
    <property type="entry name" value="Arg_repressor_C"/>
    <property type="match status" value="1"/>
</dbReference>
<dbReference type="PRINTS" id="PR01467">
    <property type="entry name" value="ARGREPRESSOR"/>
</dbReference>
<dbReference type="SUPFAM" id="SSF55252">
    <property type="entry name" value="C-terminal domain of arginine repressor"/>
    <property type="match status" value="1"/>
</dbReference>
<dbReference type="SUPFAM" id="SSF46785">
    <property type="entry name" value="Winged helix' DNA-binding domain"/>
    <property type="match status" value="1"/>
</dbReference>
<name>ARGR_PHOV8</name>
<comment type="function">
    <text evidence="1">Regulates arginine biosynthesis genes.</text>
</comment>
<comment type="pathway">
    <text>Amino-acid biosynthesis; L-arginine biosynthesis [regulation].</text>
</comment>
<comment type="subcellular location">
    <subcellularLocation>
        <location evidence="1">Cytoplasm</location>
    </subcellularLocation>
</comment>
<comment type="similarity">
    <text evidence="1">Belongs to the ArgR family.</text>
</comment>
<reference key="1">
    <citation type="journal article" date="2007" name="PLoS Biol.">
        <title>Evolution of symbiotic bacteria in the distal human intestine.</title>
        <authorList>
            <person name="Xu J."/>
            <person name="Mahowald M.A."/>
            <person name="Ley R.E."/>
            <person name="Lozupone C.A."/>
            <person name="Hamady M."/>
            <person name="Martens E.C."/>
            <person name="Henrissat B."/>
            <person name="Coutinho P.M."/>
            <person name="Minx P."/>
            <person name="Latreille P."/>
            <person name="Cordum H."/>
            <person name="Van Brunt A."/>
            <person name="Kim K."/>
            <person name="Fulton R.S."/>
            <person name="Fulton L.A."/>
            <person name="Clifton S.W."/>
            <person name="Wilson R.K."/>
            <person name="Knight R.D."/>
            <person name="Gordon J.I."/>
        </authorList>
    </citation>
    <scope>NUCLEOTIDE SEQUENCE [LARGE SCALE GENOMIC DNA]</scope>
    <source>
        <strain>ATCC 8482 / DSM 1447 / JCM 5826 / CCUG 4940 / NBRC 14291 / NCTC 11154</strain>
    </source>
</reference>
<keyword id="KW-0028">Amino-acid biosynthesis</keyword>
<keyword id="KW-0055">Arginine biosynthesis</keyword>
<keyword id="KW-0963">Cytoplasm</keyword>
<keyword id="KW-0238">DNA-binding</keyword>
<keyword id="KW-0678">Repressor</keyword>
<keyword id="KW-0804">Transcription</keyword>
<keyword id="KW-0805">Transcription regulation</keyword>
<feature type="chain" id="PRO_1000023547" description="Arginine repressor">
    <location>
        <begin position="1"/>
        <end position="158"/>
    </location>
</feature>
<protein>
    <recommendedName>
        <fullName evidence="1">Arginine repressor</fullName>
    </recommendedName>
</protein>
<gene>
    <name evidence="1" type="primary">argR</name>
    <name type="ordered locus">BVU_0594</name>
</gene>
<sequence length="158" mass="17528">MKSKNSRLDAIKIIISSKEVGSQEELLQELAKEGFRLTQATLSRDLKQLKVAKAASMNGNYVYVLPNNTMYKRMTEQHSASEMLMHNGFISIEFSANLAVIKTRPGYASSLAYDIDNRNFDEILGTIAGDDTIMLVIREGCTRAGVKNALSLIIPNIQ</sequence>
<organism>
    <name type="scientific">Phocaeicola vulgatus (strain ATCC 8482 / DSM 1447 / JCM 5826 / CCUG 4940 / NBRC 14291 / NCTC 11154)</name>
    <name type="common">Bacteroides vulgatus</name>
    <dbReference type="NCBI Taxonomy" id="435590"/>
    <lineage>
        <taxon>Bacteria</taxon>
        <taxon>Pseudomonadati</taxon>
        <taxon>Bacteroidota</taxon>
        <taxon>Bacteroidia</taxon>
        <taxon>Bacteroidales</taxon>
        <taxon>Bacteroidaceae</taxon>
        <taxon>Phocaeicola</taxon>
    </lineage>
</organism>
<accession>A6KXY8</accession>